<gene>
    <name evidence="4" type="primary">adrK</name>
</gene>
<sequence length="278" mass="31586">MHPDSQLETAVKNGFDPKSLYSTELTKVNEPARTILEQYSKIPAEKVLQHVKDLKDRAFEVFPYACIGQASFLELSIASSPCYPEMLDRVKKGDRLLDLGCAFGQELRQLIYDGAPSQNLYGTDLRPEFLELGLDLFLDRSFIKSHFIDADVLDDKSALVTQLTGELNIVYISLFLHVFDFETQIKVAKRVLDLLAPKAGSLIVCRVVACRDQAIGNATNARLPYYYHDLASWNRLWERVQEETGLKLKVDNWEQDDALAKKHPLEGIYMLGSSIRRE</sequence>
<proteinExistence type="inferred from homology"/>
<comment type="function">
    <text evidence="1 3">Methyltransferase; part of the gene cluster that mediates the biosynthesis of andrastins, meroterpenoid compounds that exhibit inhibitory activity against ras farnesyltransferase, suggesting that they could be promising leads for antitumor agents (PubMed:28529508). The first step of the pathway is the synthesis of 3,5-dimethylorsellinic acid (DMOA) by the polyketide synthase adrD via condensation of one acetyl-CoA starter unit with 3 malonyl-CoA units and 2 methylations (By similarity). DMAO is then converted to farnesyl-DMAO by the prenyltransferase adrG (By similarity). The methyltransferase adrK catalyzes the methylation of the carboxyl group of farnesyl-DMAO to farnesyl-DMAO methyl ester which is further converted to epoxyfarnesyl-DMAO methyl ester by the FAD-dependent monooxygenase adrH (By similarity). The terpene cyclase adrI then catalyzes the carbon skeletal rearrangement to generate the andrastin E, the first compound in the pathway having the andrastin scaffold, with the tetracyclic ring system (By similarity). The post-cyclization tailoring enzymes adrF, adrE, adrJ, and adrA, are involved in the conversion of andrastin E into andrastin A. The short chain dehydrogenase adrF is responsible for the oxidation of the C-3 a hydroxyl group of andrastin E to yield the corresponding ketone, andrastin D. The ketoreductase adrE stereoselectively reduces the carbonyl moiety to reverse the stereochemistry of the C-3 position to yield andrastin F. The acetyltransferase adrJ is the acetyltransferase that attaches the acetyl group to the C-3 hydroxyl group of andrastin F to yield andrastin C. Finally, the cytochrome P450 monooxygenase adrA catalyzes two sequential oxidation reactions of the C-23 methyl group, to generate the corresponding alcohol andrastin B, and aldehyde andrastin A (By similarity).</text>
</comment>
<comment type="pathway">
    <text evidence="3">Secondary metabolite biosynthesis; terpenoid biosynthesis.</text>
</comment>
<comment type="subunit">
    <text evidence="2">Homodimer.</text>
</comment>
<comment type="disruption phenotype">
    <text evidence="3">Drastically reduces the production of andrastin A.</text>
</comment>
<comment type="similarity">
    <text evidence="5">Belongs to the class I-like SAM-binding methyltransferase superfamily.</text>
</comment>
<organism>
    <name type="scientific">Penicillium roqueforti</name>
    <dbReference type="NCBI Taxonomy" id="5082"/>
    <lineage>
        <taxon>Eukaryota</taxon>
        <taxon>Fungi</taxon>
        <taxon>Dikarya</taxon>
        <taxon>Ascomycota</taxon>
        <taxon>Pezizomycotina</taxon>
        <taxon>Eurotiomycetes</taxon>
        <taxon>Eurotiomycetidae</taxon>
        <taxon>Eurotiales</taxon>
        <taxon>Aspergillaceae</taxon>
        <taxon>Penicillium</taxon>
    </lineage>
</organism>
<evidence type="ECO:0000250" key="1">
    <source>
        <dbReference type="UniProtKB" id="B6HV39"/>
    </source>
</evidence>
<evidence type="ECO:0000250" key="2">
    <source>
        <dbReference type="UniProtKB" id="Q3J7D1"/>
    </source>
</evidence>
<evidence type="ECO:0000269" key="3">
    <source>
    </source>
</evidence>
<evidence type="ECO:0000303" key="4">
    <source>
    </source>
</evidence>
<evidence type="ECO:0000305" key="5"/>
<evidence type="ECO:0000305" key="6">
    <source>
    </source>
</evidence>
<reference key="1">
    <citation type="journal article" date="2017" name="Front. Microbiol.">
        <title>The biosynthetic gene cluster for andrastin A in Penicillium roqueforti.</title>
        <authorList>
            <person name="Rojas-Aedo J.F."/>
            <person name="Gil-Duran C."/>
            <person name="Del-Cid A."/>
            <person name="Valdes N."/>
            <person name="Alamos P."/>
            <person name="Vaca I."/>
            <person name="Garcia-Rico R.O."/>
            <person name="Levican G."/>
            <person name="Tello M."/>
            <person name="Chavez R."/>
        </authorList>
    </citation>
    <scope>NUCLEOTIDE SEQUENCE [GENOMIC DNA]</scope>
    <scope>IDENTIFICATION</scope>
    <scope>FUNCTION</scope>
    <scope>DISRUPTION PHENOTYPE</scope>
    <source>
        <strain>CECT 2905</strain>
    </source>
</reference>
<keyword id="KW-0489">Methyltransferase</keyword>
<keyword id="KW-0949">S-adenosyl-L-methionine</keyword>
<keyword id="KW-0808">Transferase</keyword>
<feature type="chain" id="PRO_0000446499" description="Methyltransferase adrK">
    <location>
        <begin position="1"/>
        <end position="278"/>
    </location>
</feature>
<feature type="binding site" evidence="2">
    <location>
        <begin position="124"/>
        <end position="125"/>
    </location>
    <ligand>
        <name>S-adenosyl-L-methionine</name>
        <dbReference type="ChEBI" id="CHEBI:59789"/>
    </ligand>
</feature>
<feature type="binding site" evidence="2">
    <location>
        <begin position="151"/>
        <end position="152"/>
    </location>
    <ligand>
        <name>S-adenosyl-L-methionine</name>
        <dbReference type="ChEBI" id="CHEBI:59789"/>
    </ligand>
</feature>
<feature type="binding site" evidence="2">
    <location>
        <begin position="152"/>
        <end position="153"/>
    </location>
    <ligand>
        <name>S-adenosyl-L-methionine</name>
        <dbReference type="ChEBI" id="CHEBI:59789"/>
    </ligand>
</feature>
<name>ADRK_PENRO</name>
<dbReference type="EC" id="2.1.3.-" evidence="6"/>
<dbReference type="EMBL" id="KY349137">
    <property type="protein sequence ID" value="ART41216.1"/>
    <property type="molecule type" value="Genomic_DNA"/>
</dbReference>
<dbReference type="SMR" id="A0A1Y0BRG0"/>
<dbReference type="OMA" id="CIRIFEF"/>
<dbReference type="UniPathway" id="UPA00213"/>
<dbReference type="GO" id="GO:0008168">
    <property type="term" value="F:methyltransferase activity"/>
    <property type="evidence" value="ECO:0007669"/>
    <property type="project" value="UniProtKB-KW"/>
</dbReference>
<dbReference type="GO" id="GO:0032259">
    <property type="term" value="P:methylation"/>
    <property type="evidence" value="ECO:0007669"/>
    <property type="project" value="UniProtKB-KW"/>
</dbReference>
<dbReference type="GO" id="GO:0016114">
    <property type="term" value="P:terpenoid biosynthetic process"/>
    <property type="evidence" value="ECO:0007669"/>
    <property type="project" value="UniProtKB-UniPathway"/>
</dbReference>
<dbReference type="Gene3D" id="3.40.50.150">
    <property type="entry name" value="Vaccinia Virus protein VP39"/>
    <property type="match status" value="1"/>
</dbReference>
<dbReference type="InterPro" id="IPR051654">
    <property type="entry name" value="Meroterpenoid_MTases"/>
</dbReference>
<dbReference type="InterPro" id="IPR029063">
    <property type="entry name" value="SAM-dependent_MTases_sf"/>
</dbReference>
<dbReference type="PANTHER" id="PTHR35897">
    <property type="entry name" value="METHYLTRANSFERASE AUSD"/>
    <property type="match status" value="1"/>
</dbReference>
<dbReference type="PANTHER" id="PTHR35897:SF1">
    <property type="entry name" value="METHYLTRANSFERASE AUSD"/>
    <property type="match status" value="1"/>
</dbReference>
<dbReference type="SUPFAM" id="SSF53335">
    <property type="entry name" value="S-adenosyl-L-methionine-dependent methyltransferases"/>
    <property type="match status" value="1"/>
</dbReference>
<accession>A0A1Y0BRG0</accession>
<protein>
    <recommendedName>
        <fullName evidence="4">Methyltransferase adrK</fullName>
        <ecNumber evidence="6">2.1.3.-</ecNumber>
    </recommendedName>
    <alternativeName>
        <fullName evidence="4">Andrastin A biosynthesis cluster protein K</fullName>
    </alternativeName>
</protein>